<sequence>MASGKPKKKNPRLASGRKRARQGLKLNAANTSLRSKYRTAVKNVEKAVLAGDKTKATELFAKAQSVLDTIADKGIFHKNKAARDKSRLSAKVKALALAAA</sequence>
<accession>A1WA60</accession>
<name>RS20_ACISJ</name>
<comment type="function">
    <text evidence="1">Binds directly to 16S ribosomal RNA.</text>
</comment>
<comment type="similarity">
    <text evidence="1">Belongs to the bacterial ribosomal protein bS20 family.</text>
</comment>
<gene>
    <name evidence="1" type="primary">rpsT</name>
    <name type="ordered locus">Ajs_3000</name>
</gene>
<organism>
    <name type="scientific">Acidovorax sp. (strain JS42)</name>
    <dbReference type="NCBI Taxonomy" id="232721"/>
    <lineage>
        <taxon>Bacteria</taxon>
        <taxon>Pseudomonadati</taxon>
        <taxon>Pseudomonadota</taxon>
        <taxon>Betaproteobacteria</taxon>
        <taxon>Burkholderiales</taxon>
        <taxon>Comamonadaceae</taxon>
        <taxon>Acidovorax</taxon>
    </lineage>
</organism>
<dbReference type="EMBL" id="CP000539">
    <property type="protein sequence ID" value="ABM43135.1"/>
    <property type="molecule type" value="Genomic_DNA"/>
</dbReference>
<dbReference type="SMR" id="A1WA60"/>
<dbReference type="STRING" id="232721.Ajs_3000"/>
<dbReference type="KEGG" id="ajs:Ajs_3000"/>
<dbReference type="eggNOG" id="COG0268">
    <property type="taxonomic scope" value="Bacteria"/>
</dbReference>
<dbReference type="HOGENOM" id="CLU_160655_4_0_4"/>
<dbReference type="Proteomes" id="UP000000645">
    <property type="component" value="Chromosome"/>
</dbReference>
<dbReference type="GO" id="GO:0005829">
    <property type="term" value="C:cytosol"/>
    <property type="evidence" value="ECO:0007669"/>
    <property type="project" value="TreeGrafter"/>
</dbReference>
<dbReference type="GO" id="GO:0015935">
    <property type="term" value="C:small ribosomal subunit"/>
    <property type="evidence" value="ECO:0007669"/>
    <property type="project" value="TreeGrafter"/>
</dbReference>
<dbReference type="GO" id="GO:0070181">
    <property type="term" value="F:small ribosomal subunit rRNA binding"/>
    <property type="evidence" value="ECO:0007669"/>
    <property type="project" value="TreeGrafter"/>
</dbReference>
<dbReference type="GO" id="GO:0003735">
    <property type="term" value="F:structural constituent of ribosome"/>
    <property type="evidence" value="ECO:0007669"/>
    <property type="project" value="InterPro"/>
</dbReference>
<dbReference type="GO" id="GO:0006412">
    <property type="term" value="P:translation"/>
    <property type="evidence" value="ECO:0007669"/>
    <property type="project" value="UniProtKB-UniRule"/>
</dbReference>
<dbReference type="FunFam" id="1.20.58.110:FF:000001">
    <property type="entry name" value="30S ribosomal protein S20"/>
    <property type="match status" value="1"/>
</dbReference>
<dbReference type="Gene3D" id="1.20.58.110">
    <property type="entry name" value="Ribosomal protein S20"/>
    <property type="match status" value="1"/>
</dbReference>
<dbReference type="HAMAP" id="MF_00500">
    <property type="entry name" value="Ribosomal_bS20"/>
    <property type="match status" value="1"/>
</dbReference>
<dbReference type="InterPro" id="IPR002583">
    <property type="entry name" value="Ribosomal_bS20"/>
</dbReference>
<dbReference type="InterPro" id="IPR036510">
    <property type="entry name" value="Ribosomal_bS20_sf"/>
</dbReference>
<dbReference type="NCBIfam" id="TIGR00029">
    <property type="entry name" value="S20"/>
    <property type="match status" value="1"/>
</dbReference>
<dbReference type="PANTHER" id="PTHR33398">
    <property type="entry name" value="30S RIBOSOMAL PROTEIN S20"/>
    <property type="match status" value="1"/>
</dbReference>
<dbReference type="PANTHER" id="PTHR33398:SF1">
    <property type="entry name" value="SMALL RIBOSOMAL SUBUNIT PROTEIN BS20C"/>
    <property type="match status" value="1"/>
</dbReference>
<dbReference type="Pfam" id="PF01649">
    <property type="entry name" value="Ribosomal_S20p"/>
    <property type="match status" value="1"/>
</dbReference>
<dbReference type="SUPFAM" id="SSF46992">
    <property type="entry name" value="Ribosomal protein S20"/>
    <property type="match status" value="1"/>
</dbReference>
<proteinExistence type="inferred from homology"/>
<protein>
    <recommendedName>
        <fullName evidence="1">Small ribosomal subunit protein bS20</fullName>
    </recommendedName>
    <alternativeName>
        <fullName evidence="3">30S ribosomal protein S20</fullName>
    </alternativeName>
</protein>
<reference key="1">
    <citation type="submission" date="2006-12" db="EMBL/GenBank/DDBJ databases">
        <title>Complete sequence of chromosome 1 of Acidovorax sp. JS42.</title>
        <authorList>
            <person name="Copeland A."/>
            <person name="Lucas S."/>
            <person name="Lapidus A."/>
            <person name="Barry K."/>
            <person name="Detter J.C."/>
            <person name="Glavina del Rio T."/>
            <person name="Dalin E."/>
            <person name="Tice H."/>
            <person name="Pitluck S."/>
            <person name="Chertkov O."/>
            <person name="Brettin T."/>
            <person name="Bruce D."/>
            <person name="Han C."/>
            <person name="Tapia R."/>
            <person name="Gilna P."/>
            <person name="Schmutz J."/>
            <person name="Larimer F."/>
            <person name="Land M."/>
            <person name="Hauser L."/>
            <person name="Kyrpides N."/>
            <person name="Kim E."/>
            <person name="Stahl D."/>
            <person name="Richardson P."/>
        </authorList>
    </citation>
    <scope>NUCLEOTIDE SEQUENCE [LARGE SCALE GENOMIC DNA]</scope>
    <source>
        <strain>JS42</strain>
    </source>
</reference>
<evidence type="ECO:0000255" key="1">
    <source>
        <dbReference type="HAMAP-Rule" id="MF_00500"/>
    </source>
</evidence>
<evidence type="ECO:0000256" key="2">
    <source>
        <dbReference type="SAM" id="MobiDB-lite"/>
    </source>
</evidence>
<evidence type="ECO:0000305" key="3"/>
<keyword id="KW-0687">Ribonucleoprotein</keyword>
<keyword id="KW-0689">Ribosomal protein</keyword>
<keyword id="KW-0694">RNA-binding</keyword>
<keyword id="KW-0699">rRNA-binding</keyword>
<feature type="chain" id="PRO_1000014539" description="Small ribosomal subunit protein bS20">
    <location>
        <begin position="1"/>
        <end position="100"/>
    </location>
</feature>
<feature type="region of interest" description="Disordered" evidence="2">
    <location>
        <begin position="1"/>
        <end position="26"/>
    </location>
</feature>
<feature type="compositionally biased region" description="Basic residues" evidence="2">
    <location>
        <begin position="1"/>
        <end position="22"/>
    </location>
</feature>